<protein>
    <recommendedName>
        <fullName>2-(3-amino-3-carboxypropyl)histidine synthase</fullName>
        <ecNumber evidence="1">2.5.1.108</ecNumber>
    </recommendedName>
    <alternativeName>
        <fullName>Diphthamide biosynthesis protein Dph2</fullName>
    </alternativeName>
    <alternativeName>
        <fullName>S-adenosyl-L-methionine:L-histidine 3-amino-3-carboxypropyltransferase</fullName>
    </alternativeName>
</protein>
<accession>O58832</accession>
<name>DPH2_PYRHO</name>
<evidence type="ECO:0000269" key="1">
    <source>
    </source>
</evidence>
<evidence type="ECO:0000269" key="2">
    <source>
    </source>
</evidence>
<evidence type="ECO:0000303" key="3">
    <source>
    </source>
</evidence>
<evidence type="ECO:0000305" key="4"/>
<evidence type="ECO:0007829" key="5">
    <source>
        <dbReference type="PDB" id="3LZD"/>
    </source>
</evidence>
<organism>
    <name type="scientific">Pyrococcus horikoshii (strain ATCC 700860 / DSM 12428 / JCM 9974 / NBRC 100139 / OT-3)</name>
    <dbReference type="NCBI Taxonomy" id="70601"/>
    <lineage>
        <taxon>Archaea</taxon>
        <taxon>Methanobacteriati</taxon>
        <taxon>Methanobacteriota</taxon>
        <taxon>Thermococci</taxon>
        <taxon>Thermococcales</taxon>
        <taxon>Thermococcaceae</taxon>
        <taxon>Pyrococcus</taxon>
    </lineage>
</organism>
<sequence>MLHEIPKSEILKELKRIGAKRVLIQSPEGLRREAEELAGFLEENNIEVFLHGEINYGACDPADREAKLVGCDALIHLGHSYMKLPLEVPTIFVPAFARVSVVEALKENIGEIKKLGRKIIVTTTAQHIHQLKEAKEFLESEGFEVSIGRGDSRISWPGQVLGCNYSVAKVRGEGILFIGSGIFHPLGLAVATRKKVLAIDPYTKAFSWIDPERFIRKRWAQIAKAMDAKKFGVIVSIKKGQLRLAEAKRIVKLLKKHGREARLIVMNDVNYHKLEGFPFEAYVVVACPRVPLDDYGAWRKPVLTPKEVEILLGLREEYEFDEILGGPRESDEPFGISIHSTR</sequence>
<keyword id="KW-0002">3D-structure</keyword>
<keyword id="KW-0004">4Fe-4S</keyword>
<keyword id="KW-0408">Iron</keyword>
<keyword id="KW-0411">Iron-sulfur</keyword>
<keyword id="KW-0479">Metal-binding</keyword>
<keyword id="KW-0949">S-adenosyl-L-methionine</keyword>
<keyword id="KW-0808">Transferase</keyword>
<dbReference type="EC" id="2.5.1.108" evidence="1"/>
<dbReference type="EMBL" id="BA000001">
    <property type="protein sequence ID" value="BAA30204.1"/>
    <property type="molecule type" value="Genomic_DNA"/>
</dbReference>
<dbReference type="PIR" id="B71051">
    <property type="entry name" value="B71051"/>
</dbReference>
<dbReference type="RefSeq" id="WP_010885188.1">
    <property type="nucleotide sequence ID" value="NC_000961.1"/>
</dbReference>
<dbReference type="PDB" id="3LZC">
    <property type="method" value="X-ray"/>
    <property type="resolution" value="2.26 A"/>
    <property type="chains" value="A/B=1-342"/>
</dbReference>
<dbReference type="PDB" id="3LZD">
    <property type="method" value="X-ray"/>
    <property type="resolution" value="2.10 A"/>
    <property type="chains" value="A/B=1-342"/>
</dbReference>
<dbReference type="PDB" id="6BXK">
    <property type="method" value="X-ray"/>
    <property type="resolution" value="2.35 A"/>
    <property type="chains" value="A/B=1-342"/>
</dbReference>
<dbReference type="PDB" id="6BXL">
    <property type="method" value="X-ray"/>
    <property type="resolution" value="2.30 A"/>
    <property type="chains" value="A/B=1-342"/>
</dbReference>
<dbReference type="PDBsum" id="3LZC"/>
<dbReference type="PDBsum" id="3LZD"/>
<dbReference type="PDBsum" id="6BXK"/>
<dbReference type="PDBsum" id="6BXL"/>
<dbReference type="SMR" id="O58832"/>
<dbReference type="STRING" id="70601.gene:9378064"/>
<dbReference type="EnsemblBacteria" id="BAA30204">
    <property type="protein sequence ID" value="BAA30204"/>
    <property type="gene ID" value="BAA30204"/>
</dbReference>
<dbReference type="GeneID" id="1443423"/>
<dbReference type="KEGG" id="pho:PH1105"/>
<dbReference type="eggNOG" id="arCOG04112">
    <property type="taxonomic scope" value="Archaea"/>
</dbReference>
<dbReference type="OrthoDB" id="314at2157"/>
<dbReference type="BioCyc" id="MetaCyc:MONOMER-18826"/>
<dbReference type="BRENDA" id="2.5.1.108">
    <property type="organism ID" value="5244"/>
</dbReference>
<dbReference type="UniPathway" id="UPA00559"/>
<dbReference type="EvolutionaryTrace" id="O58832"/>
<dbReference type="Proteomes" id="UP000000752">
    <property type="component" value="Chromosome"/>
</dbReference>
<dbReference type="GO" id="GO:0090560">
    <property type="term" value="F:2-(3-amino-3-carboxypropyl)histidine synthase activity"/>
    <property type="evidence" value="ECO:0007669"/>
    <property type="project" value="UniProtKB-EC"/>
</dbReference>
<dbReference type="GO" id="GO:0051539">
    <property type="term" value="F:4 iron, 4 sulfur cluster binding"/>
    <property type="evidence" value="ECO:0000314"/>
    <property type="project" value="UniProtKB"/>
</dbReference>
<dbReference type="GO" id="GO:0046872">
    <property type="term" value="F:metal ion binding"/>
    <property type="evidence" value="ECO:0007669"/>
    <property type="project" value="UniProtKB-KW"/>
</dbReference>
<dbReference type="GO" id="GO:0016765">
    <property type="term" value="F:transferase activity, transferring alkyl or aryl (other than methyl) groups"/>
    <property type="evidence" value="ECO:0000314"/>
    <property type="project" value="UniProtKB"/>
</dbReference>
<dbReference type="GO" id="GO:0017183">
    <property type="term" value="P:protein histidyl modification to diphthamide"/>
    <property type="evidence" value="ECO:0000314"/>
    <property type="project" value="UniProtKB"/>
</dbReference>
<dbReference type="GO" id="GO:0050843">
    <property type="term" value="P:S-adenosylmethionine catabolic process"/>
    <property type="evidence" value="ECO:0000314"/>
    <property type="project" value="UniProtKB"/>
</dbReference>
<dbReference type="FunFam" id="3.40.50.11850:FF:000004">
    <property type="entry name" value="2-(3-amino-3-carboxypropyl)histidine synthase"/>
    <property type="match status" value="1"/>
</dbReference>
<dbReference type="FunFam" id="3.40.50.11860:FF:000003">
    <property type="entry name" value="2-(3-amino-3-carboxypropyl)histidine synthase"/>
    <property type="match status" value="1"/>
</dbReference>
<dbReference type="FunFam" id="3.40.50.11840:FF:000003">
    <property type="entry name" value="2-(3-amino-3-carboxypropyl)histidine synthase subunit 1"/>
    <property type="match status" value="1"/>
</dbReference>
<dbReference type="Gene3D" id="3.40.50.11840">
    <property type="entry name" value="Diphthamide synthesis DPH1/DPH2 domain 1"/>
    <property type="match status" value="1"/>
</dbReference>
<dbReference type="Gene3D" id="3.40.50.11850">
    <property type="entry name" value="Diphthamide synthesis DPH1/DPH2 domain 2"/>
    <property type="match status" value="1"/>
</dbReference>
<dbReference type="Gene3D" id="3.40.50.11860">
    <property type="entry name" value="Diphthamide synthesis DPH1/DPH2 domain 3"/>
    <property type="match status" value="1"/>
</dbReference>
<dbReference type="InterPro" id="IPR016435">
    <property type="entry name" value="DPH1/DPH2"/>
</dbReference>
<dbReference type="InterPro" id="IPR042263">
    <property type="entry name" value="DPH1/DPH2_1"/>
</dbReference>
<dbReference type="InterPro" id="IPR042264">
    <property type="entry name" value="DPH1/DPH2_2"/>
</dbReference>
<dbReference type="InterPro" id="IPR042265">
    <property type="entry name" value="DPH1/DPH2_3"/>
</dbReference>
<dbReference type="InterPro" id="IPR035435">
    <property type="entry name" value="DPH1/DPH2_euk_archaea"/>
</dbReference>
<dbReference type="InterPro" id="IPR022428">
    <property type="entry name" value="Dph2_arc"/>
</dbReference>
<dbReference type="NCBIfam" id="TIGR03682">
    <property type="entry name" value="arCOG04112"/>
    <property type="match status" value="1"/>
</dbReference>
<dbReference type="NCBIfam" id="TIGR00322">
    <property type="entry name" value="diphth2_R"/>
    <property type="match status" value="1"/>
</dbReference>
<dbReference type="PANTHER" id="PTHR10762:SF1">
    <property type="entry name" value="2-(3-AMINO-3-CARBOXYPROPYL)HISTIDINE SYNTHASE SUBUNIT 1"/>
    <property type="match status" value="1"/>
</dbReference>
<dbReference type="PANTHER" id="PTHR10762">
    <property type="entry name" value="DIPHTHAMIDE BIOSYNTHESIS PROTEIN"/>
    <property type="match status" value="1"/>
</dbReference>
<dbReference type="Pfam" id="PF01866">
    <property type="entry name" value="Diphthamide_syn"/>
    <property type="match status" value="1"/>
</dbReference>
<dbReference type="PIRSF" id="PIRSF004967">
    <property type="entry name" value="DPH1"/>
    <property type="match status" value="1"/>
</dbReference>
<dbReference type="SFLD" id="SFLDG01121">
    <property type="entry name" value="Diphthamide_biosynthesis"/>
    <property type="match status" value="1"/>
</dbReference>
<dbReference type="SFLD" id="SFLDS00032">
    <property type="entry name" value="Radical_SAM_3-amino-3-carboxyp"/>
    <property type="match status" value="1"/>
</dbReference>
<proteinExistence type="evidence at protein level"/>
<gene>
    <name type="primary">dph2</name>
    <name type="ordered locus">PH1105</name>
</gene>
<feature type="chain" id="PRO_0000407844" description="2-(3-amino-3-carboxypropyl)histidine synthase">
    <location>
        <begin position="1"/>
        <end position="342"/>
    </location>
</feature>
<feature type="binding site">
    <location>
        <position position="59"/>
    </location>
    <ligand>
        <name>[4Fe-4S] cluster</name>
        <dbReference type="ChEBI" id="CHEBI:49883"/>
    </ligand>
</feature>
<feature type="binding site">
    <location>
        <position position="163"/>
    </location>
    <ligand>
        <name>[4Fe-4S] cluster</name>
        <dbReference type="ChEBI" id="CHEBI:49883"/>
    </ligand>
</feature>
<feature type="binding site">
    <location>
        <position position="287"/>
    </location>
    <ligand>
        <name>[4Fe-4S] cluster</name>
        <dbReference type="ChEBI" id="CHEBI:49883"/>
    </ligand>
</feature>
<feature type="mutagenesis site" description="Still able to bind a 4Fe-4S cluster. Less active than wild-type. Not able to bind a 4Fe-4S cluster and loss of catalytic activity; when associated with Ala-287." evidence="2">
    <original>C</original>
    <variation>A</variation>
    <location>
        <position position="59"/>
    </location>
</feature>
<feature type="mutagenesis site" description="Still able to bind a 4Fe-4S cluster. Less active than wild-type." evidence="2">
    <original>C</original>
    <variation>A</variation>
    <location>
        <position position="163"/>
    </location>
</feature>
<feature type="mutagenesis site" description="Still able to bind a 4Fe-4S cluster. Less active than wild-type. Not able to bind a 4Fe-4S cluster and loss of catalytic activity; when associated with Ala-59." evidence="2">
    <original>C</original>
    <variation>A</variation>
    <location>
        <position position="287"/>
    </location>
</feature>
<feature type="helix" evidence="5">
    <location>
        <begin position="7"/>
        <end position="16"/>
    </location>
</feature>
<feature type="strand" evidence="5">
    <location>
        <begin position="21"/>
        <end position="25"/>
    </location>
</feature>
<feature type="helix" evidence="5">
    <location>
        <begin position="28"/>
        <end position="30"/>
    </location>
</feature>
<feature type="helix" evidence="5">
    <location>
        <begin position="31"/>
        <end position="42"/>
    </location>
</feature>
<feature type="turn" evidence="5">
    <location>
        <begin position="43"/>
        <end position="45"/>
    </location>
</feature>
<feature type="strand" evidence="5">
    <location>
        <begin position="47"/>
        <end position="51"/>
    </location>
</feature>
<feature type="helix" evidence="5">
    <location>
        <begin position="63"/>
        <end position="68"/>
    </location>
</feature>
<feature type="strand" evidence="5">
    <location>
        <begin position="72"/>
        <end position="78"/>
    </location>
</feature>
<feature type="strand" evidence="5">
    <location>
        <begin position="90"/>
        <end position="94"/>
    </location>
</feature>
<feature type="helix" evidence="5">
    <location>
        <begin position="102"/>
        <end position="107"/>
    </location>
</feature>
<feature type="helix" evidence="5">
    <location>
        <begin position="109"/>
        <end position="113"/>
    </location>
</feature>
<feature type="strand" evidence="5">
    <location>
        <begin position="117"/>
        <end position="123"/>
    </location>
</feature>
<feature type="helix" evidence="5">
    <location>
        <begin position="125"/>
        <end position="130"/>
    </location>
</feature>
<feature type="helix" evidence="5">
    <location>
        <begin position="131"/>
        <end position="140"/>
    </location>
</feature>
<feature type="strand" evidence="5">
    <location>
        <begin position="144"/>
        <end position="146"/>
    </location>
</feature>
<feature type="helix" evidence="5">
    <location>
        <begin position="166"/>
        <end position="168"/>
    </location>
</feature>
<feature type="strand" evidence="5">
    <location>
        <begin position="173"/>
        <end position="182"/>
    </location>
</feature>
<feature type="helix" evidence="5">
    <location>
        <begin position="183"/>
        <end position="192"/>
    </location>
</feature>
<feature type="strand" evidence="5">
    <location>
        <begin position="194"/>
        <end position="199"/>
    </location>
</feature>
<feature type="turn" evidence="5">
    <location>
        <begin position="201"/>
        <end position="203"/>
    </location>
</feature>
<feature type="strand" evidence="5">
    <location>
        <begin position="206"/>
        <end position="208"/>
    </location>
</feature>
<feature type="helix" evidence="5">
    <location>
        <begin position="212"/>
        <end position="225"/>
    </location>
</feature>
<feature type="strand" evidence="5">
    <location>
        <begin position="230"/>
        <end position="236"/>
    </location>
</feature>
<feature type="turn" evidence="5">
    <location>
        <begin position="239"/>
        <end position="241"/>
    </location>
</feature>
<feature type="helix" evidence="5">
    <location>
        <begin position="244"/>
        <end position="256"/>
    </location>
</feature>
<feature type="strand" evidence="5">
    <location>
        <begin position="260"/>
        <end position="268"/>
    </location>
</feature>
<feature type="helix" evidence="5">
    <location>
        <begin position="271"/>
        <end position="274"/>
    </location>
</feature>
<feature type="strand" evidence="5">
    <location>
        <begin position="280"/>
        <end position="284"/>
    </location>
</feature>
<feature type="helix" evidence="5">
    <location>
        <begin position="289"/>
        <end position="292"/>
    </location>
</feature>
<feature type="helix" evidence="5">
    <location>
        <begin position="305"/>
        <end position="311"/>
    </location>
</feature>
<feature type="strand" evidence="5">
    <location>
        <begin position="337"/>
        <end position="339"/>
    </location>
</feature>
<reference key="1">
    <citation type="journal article" date="1998" name="DNA Res.">
        <title>Complete sequence and gene organization of the genome of a hyper-thermophilic archaebacterium, Pyrococcus horikoshii OT3.</title>
        <authorList>
            <person name="Kawarabayasi Y."/>
            <person name="Sawada M."/>
            <person name="Horikawa H."/>
            <person name="Haikawa Y."/>
            <person name="Hino Y."/>
            <person name="Yamamoto S."/>
            <person name="Sekine M."/>
            <person name="Baba S."/>
            <person name="Kosugi H."/>
            <person name="Hosoyama A."/>
            <person name="Nagai Y."/>
            <person name="Sakai M."/>
            <person name="Ogura K."/>
            <person name="Otsuka R."/>
            <person name="Nakazawa H."/>
            <person name="Takamiya M."/>
            <person name="Ohfuku Y."/>
            <person name="Funahashi T."/>
            <person name="Tanaka T."/>
            <person name="Kudoh Y."/>
            <person name="Yamazaki J."/>
            <person name="Kushida N."/>
            <person name="Oguchi A."/>
            <person name="Aoki K."/>
            <person name="Yoshizawa T."/>
            <person name="Nakamura Y."/>
            <person name="Robb F.T."/>
            <person name="Horikoshi K."/>
            <person name="Masuchi Y."/>
            <person name="Shizuya H."/>
            <person name="Kikuchi H."/>
        </authorList>
    </citation>
    <scope>NUCLEOTIDE SEQUENCE [LARGE SCALE GENOMIC DNA]</scope>
    <source>
        <strain>ATCC 700860 / DSM 12428 / JCM 9974 / NBRC 100139 / OT-3</strain>
    </source>
</reference>
<reference key="2">
    <citation type="journal article" date="2011" name="Mol. Biosyst.">
        <title>Mechanistic understanding of Pyrococcus horikoshii Dph2, a [4Fe-4S] enzyme required for diphthamide biosynthesis.</title>
        <authorList>
            <person name="Zhu X."/>
            <person name="Dzikovski B."/>
            <person name="Su X."/>
            <person name="Torelli A.T."/>
            <person name="Zhang Y."/>
            <person name="Ealick S.E."/>
            <person name="Freed J.H."/>
            <person name="Lin H."/>
        </authorList>
    </citation>
    <scope>REACTION MECHANISM</scope>
    <scope>MUTAGENESIS OF CYS-59; CYS-163 AND CYS-287</scope>
</reference>
<reference key="3">
    <citation type="journal article" date="2010" name="Nature">
        <title>Diphthamide biosynthesis requires an organic radical generated by an iron-sulphur enzyme.</title>
        <authorList>
            <person name="Zhang Y."/>
            <person name="Zhu X."/>
            <person name="Torelli A.T."/>
            <person name="Lee M."/>
            <person name="Dzikovski B."/>
            <person name="Koralewski R.M."/>
            <person name="Wang E."/>
            <person name="Freed J."/>
            <person name="Krebs C."/>
            <person name="Ealick S.E."/>
            <person name="Lin H."/>
        </authorList>
    </citation>
    <scope>X-RAY CRYSTALLOGRAPHY (2.10 ANGSTROMS) OF NATIVE PROTEIN AND IN COMPLEX WITH IRON-SULFUR (4FE-4S) CLUSTER</scope>
    <scope>FUNCTION</scope>
    <scope>CATALYTIC ACTIVITY</scope>
    <scope>COFACTOR</scope>
    <scope>SUBUNIT</scope>
    <scope>PATHWAY</scope>
    <scope>REACTION MECHANISM</scope>
</reference>
<comment type="function">
    <text evidence="1">Catalyzes the first step of diphthamide biosynthesis, i.e. the transfer of the 3-amino-3-carboxypropyl group from S-adenosyl-L-methionine (SAM) to the C2 position of the imidazole ring of the target histidine residue in translation elongation factor 2 (EF-2).</text>
</comment>
<comment type="catalytic activity">
    <reaction evidence="1">
        <text>L-histidyl-[translation elongation factor 2] + S-adenosyl-L-methionine = 2-[(3S)-amino-3-carboxypropyl]-L-histidyl-[translation elongation factor 2] + S-methyl-5'-thioadenosine + H(+)</text>
        <dbReference type="Rhea" id="RHEA:36783"/>
        <dbReference type="Rhea" id="RHEA-COMP:9748"/>
        <dbReference type="Rhea" id="RHEA-COMP:9749"/>
        <dbReference type="ChEBI" id="CHEBI:15378"/>
        <dbReference type="ChEBI" id="CHEBI:17509"/>
        <dbReference type="ChEBI" id="CHEBI:29979"/>
        <dbReference type="ChEBI" id="CHEBI:59789"/>
        <dbReference type="ChEBI" id="CHEBI:73995"/>
        <dbReference type="EC" id="2.5.1.108"/>
    </reaction>
</comment>
<comment type="cofactor">
    <cofactor evidence="1">
        <name>[4Fe-4S] cluster</name>
        <dbReference type="ChEBI" id="CHEBI:49883"/>
    </cofactor>
    <text evidence="1">Binds 1 [4Fe-4S] cluster per subunit. The cluster is coordinated with 3 cysteines and an exchangeable S-adenosyl-L-methionine.</text>
</comment>
<comment type="pathway">
    <text evidence="1">Protein modification; peptidyl-diphthamide biosynthesis.</text>
</comment>
<comment type="subunit">
    <text evidence="1">Homodimer.</text>
</comment>
<comment type="miscellaneous">
    <text evidence="3">Unlike the enzymes in the radical SAM superfamily, Dph2 does not form the canonical 5'-deoxyadenosyl radical. Instead, it breaks the C(gamma)-S bond of SAM and generates a 3-amino-3-carboxypropyl radical intermediate. Thus, the P.horikoshii Dph2 represents a previously unknown, SAM-dependent, [4Fe-4S]-containing enzyme that catalyzes unprecedented chemistry. Moreover, the chemistry requires only one [4Fe-4S] cluster to be present in the Dph2 dimer, although each monomer can bind a [4Fe-4S] cluster.</text>
</comment>
<comment type="miscellaneous">
    <text>In contrast to eukaryotes that require four gene products (DPH1, DPH2, DPH3 and DPH4) to catalyze the first step of diphthamide biosynthesis, no other protein than Dph2 is required in P.horikoshii.</text>
</comment>
<comment type="similarity">
    <text evidence="4">Belongs to the DPH1/DPH2 family.</text>
</comment>